<keyword id="KW-0963">Cytoplasm</keyword>
<keyword id="KW-1185">Reference proteome</keyword>
<keyword id="KW-0677">Repeat</keyword>
<keyword id="KW-0694">RNA-binding</keyword>
<keyword id="KW-0810">Translation regulation</keyword>
<comment type="function">
    <text evidence="1">Sequence-specific RNA-binding protein that regulates translation and mRNA stability by binding the 3'-UTR of target mRNAs.</text>
</comment>
<comment type="subcellular location">
    <subcellularLocation>
        <location evidence="3">Cytoplasm</location>
    </subcellularLocation>
</comment>
<comment type="domain">
    <text evidence="1">The pumilio repeats mediate the association with RNA by packing together to form a right-handed superhelix that approximates a half donut. The number as well as the specific sequence of the repeats determine the specificity for target mRNAs (By similarity).</text>
</comment>
<comment type="sequence caution" evidence="3">
    <conflict type="erroneous initiation">
        <sequence resource="EMBL-CDS" id="BAA97499"/>
    </conflict>
    <text>Truncated N-terminus.</text>
</comment>
<gene>
    <name type="primary">APUM19</name>
    <name type="ordered locus">At5g60180</name>
    <name type="ORF">F15L12.7</name>
</gene>
<name>PUM19_ARATH</name>
<dbReference type="EMBL" id="AB026632">
    <property type="protein sequence ID" value="BAA97499.1"/>
    <property type="status" value="ALT_INIT"/>
    <property type="molecule type" value="Genomic_DNA"/>
</dbReference>
<dbReference type="EMBL" id="CP002688">
    <property type="protein sequence ID" value="AED97290.1"/>
    <property type="molecule type" value="Genomic_DNA"/>
</dbReference>
<dbReference type="RefSeq" id="NP_200826.1">
    <property type="nucleotide sequence ID" value="NM_125411.2"/>
</dbReference>
<dbReference type="SMR" id="Q9LSS8"/>
<dbReference type="PaxDb" id="3702-AT5G60180.1"/>
<dbReference type="EnsemblPlants" id="AT5G60180.1">
    <property type="protein sequence ID" value="AT5G60180.1"/>
    <property type="gene ID" value="AT5G60180"/>
</dbReference>
<dbReference type="GeneID" id="836140"/>
<dbReference type="Gramene" id="AT5G60180.1">
    <property type="protein sequence ID" value="AT5G60180.1"/>
    <property type="gene ID" value="AT5G60180"/>
</dbReference>
<dbReference type="KEGG" id="ath:AT5G60180"/>
<dbReference type="Araport" id="AT5G60180"/>
<dbReference type="TAIR" id="AT5G60180">
    <property type="gene designation" value="PUM19"/>
</dbReference>
<dbReference type="eggNOG" id="KOG2049">
    <property type="taxonomic scope" value="Eukaryota"/>
</dbReference>
<dbReference type="HOGENOM" id="CLU_048501_0_0_1"/>
<dbReference type="InParanoid" id="Q9LSS8"/>
<dbReference type="OMA" id="KLMPVRH"/>
<dbReference type="OrthoDB" id="668540at2759"/>
<dbReference type="PhylomeDB" id="Q9LSS8"/>
<dbReference type="PRO" id="PR:Q9LSS8"/>
<dbReference type="Proteomes" id="UP000006548">
    <property type="component" value="Chromosome 5"/>
</dbReference>
<dbReference type="ExpressionAtlas" id="Q9LSS8">
    <property type="expression patterns" value="baseline and differential"/>
</dbReference>
<dbReference type="GO" id="GO:0005737">
    <property type="term" value="C:cytoplasm"/>
    <property type="evidence" value="ECO:0007669"/>
    <property type="project" value="UniProtKB-SubCell"/>
</dbReference>
<dbReference type="GO" id="GO:0003723">
    <property type="term" value="F:RNA binding"/>
    <property type="evidence" value="ECO:0007669"/>
    <property type="project" value="UniProtKB-KW"/>
</dbReference>
<dbReference type="GO" id="GO:0006417">
    <property type="term" value="P:regulation of translation"/>
    <property type="evidence" value="ECO:0007669"/>
    <property type="project" value="UniProtKB-KW"/>
</dbReference>
<dbReference type="Gene3D" id="1.25.10.10">
    <property type="entry name" value="Leucine-rich Repeat Variant"/>
    <property type="match status" value="1"/>
</dbReference>
<dbReference type="InterPro" id="IPR011989">
    <property type="entry name" value="ARM-like"/>
</dbReference>
<dbReference type="InterPro" id="IPR016024">
    <property type="entry name" value="ARM-type_fold"/>
</dbReference>
<dbReference type="InterPro" id="IPR033133">
    <property type="entry name" value="PUM-HD"/>
</dbReference>
<dbReference type="InterPro" id="IPR001313">
    <property type="entry name" value="Pumilio_RNA-bd_rpt"/>
</dbReference>
<dbReference type="PANTHER" id="PTHR12537:SF166">
    <property type="entry name" value="PUMILIO HOMOLOG 18-RELATED"/>
    <property type="match status" value="1"/>
</dbReference>
<dbReference type="PANTHER" id="PTHR12537">
    <property type="entry name" value="RNA BINDING PROTEIN PUMILIO-RELATED"/>
    <property type="match status" value="1"/>
</dbReference>
<dbReference type="Pfam" id="PF00806">
    <property type="entry name" value="PUF"/>
    <property type="match status" value="4"/>
</dbReference>
<dbReference type="SMART" id="SM00025">
    <property type="entry name" value="Pumilio"/>
    <property type="match status" value="6"/>
</dbReference>
<dbReference type="SUPFAM" id="SSF48371">
    <property type="entry name" value="ARM repeat"/>
    <property type="match status" value="1"/>
</dbReference>
<dbReference type="PROSITE" id="PS50302">
    <property type="entry name" value="PUM"/>
    <property type="match status" value="5"/>
</dbReference>
<dbReference type="PROSITE" id="PS50303">
    <property type="entry name" value="PUM_HD"/>
    <property type="match status" value="1"/>
</dbReference>
<reference key="1">
    <citation type="submission" date="1999-04" db="EMBL/GenBank/DDBJ databases">
        <title>Structural analysis of Arabidopsis thaliana chromosome 5. XI.</title>
        <authorList>
            <person name="Kaneko T."/>
            <person name="Katoh T."/>
            <person name="Asamizu E."/>
            <person name="Sato S."/>
            <person name="Nakamura Y."/>
            <person name="Kotani H."/>
            <person name="Tabata S."/>
        </authorList>
    </citation>
    <scope>NUCLEOTIDE SEQUENCE [LARGE SCALE GENOMIC DNA]</scope>
    <source>
        <strain>cv. Columbia</strain>
    </source>
</reference>
<reference key="2">
    <citation type="journal article" date="2017" name="Plant J.">
        <title>Araport11: a complete reannotation of the Arabidopsis thaliana reference genome.</title>
        <authorList>
            <person name="Cheng C.Y."/>
            <person name="Krishnakumar V."/>
            <person name="Chan A.P."/>
            <person name="Thibaud-Nissen F."/>
            <person name="Schobel S."/>
            <person name="Town C.D."/>
        </authorList>
    </citation>
    <scope>GENOME REANNOTATION</scope>
    <source>
        <strain>cv. Columbia</strain>
    </source>
</reference>
<reference key="3">
    <citation type="journal article" date="2009" name="FEBS J.">
        <title>Molecular characterization of Arabidopsis thaliana PUF proteins -- binding specificity and target candidates.</title>
        <authorList>
            <person name="Francischini C.W."/>
            <person name="Quaggio R.B."/>
        </authorList>
    </citation>
    <scope>GENE FAMILY</scope>
</reference>
<reference key="4">
    <citation type="journal article" date="2010" name="BMC Plant Biol.">
        <title>The Puf family of RNA-binding proteins in plants: phylogeny, structural modeling, activity and subcellular localization.</title>
        <authorList>
            <person name="Tam P.P."/>
            <person name="Barrette-Ng I.H."/>
            <person name="Simon D.M."/>
            <person name="Tam M.W."/>
            <person name="Ang A.L."/>
            <person name="Muench D.G."/>
        </authorList>
    </citation>
    <scope>GENE FAMILY</scope>
</reference>
<sequence length="327" mass="37063">MAVSDNTFSMSTMFNALPNPTETSGYIPPSGFAPRASATPLHAALFNLMTDGDGVSYFKEMISKSDKTELQRMASLLTSDSDYFMSIVTTKFGSRRVQKLLGKSDDVDAFFCAAILRRFLHITTDKYASYVTIRAMVVFDKVMKKALYERILYHALDLACDQHGCIALNDIITDADDPYYRDQLLELVVSNALRLSNDASGNFVVQHVLTLYDSRCIHNIAVNLYGQCIELSFKKYGSYIVEKLLEVEESMVVVVVELLGCDGDRLMRLARNEFGNFVVVKALRFTKEMRMDLFWGLVQKLMPFIHLLRRSHGNNIANILDTFRLRC</sequence>
<accession>Q9LSS8</accession>
<proteinExistence type="inferred from homology"/>
<protein>
    <recommendedName>
        <fullName>Putative pumilio homolog 19</fullName>
        <shortName>APUM-19</shortName>
        <shortName>AtPUM19</shortName>
    </recommendedName>
</protein>
<feature type="chain" id="PRO_0000401401" description="Putative pumilio homolog 19">
    <location>
        <begin position="1"/>
        <end position="327"/>
    </location>
</feature>
<feature type="domain" description="PUM-HD" evidence="2">
    <location>
        <begin position="1"/>
        <end position="324"/>
    </location>
</feature>
<feature type="repeat" description="Pumilio 1">
    <location>
        <begin position="79"/>
        <end position="114"/>
    </location>
</feature>
<feature type="repeat" description="Pumilio 2">
    <location>
        <begin position="115"/>
        <end position="149"/>
    </location>
</feature>
<feature type="repeat" description="Pumilio 3">
    <location>
        <begin position="150"/>
        <end position="185"/>
    </location>
</feature>
<feature type="repeat" description="Pumilio 4">
    <location>
        <begin position="186"/>
        <end position="222"/>
    </location>
</feature>
<feature type="repeat" description="Pumilio 5">
    <location>
        <begin position="223"/>
        <end position="260"/>
    </location>
</feature>
<feature type="repeat" description="Pumilio 6">
    <location>
        <begin position="261"/>
        <end position="295"/>
    </location>
</feature>
<organism>
    <name type="scientific">Arabidopsis thaliana</name>
    <name type="common">Mouse-ear cress</name>
    <dbReference type="NCBI Taxonomy" id="3702"/>
    <lineage>
        <taxon>Eukaryota</taxon>
        <taxon>Viridiplantae</taxon>
        <taxon>Streptophyta</taxon>
        <taxon>Embryophyta</taxon>
        <taxon>Tracheophyta</taxon>
        <taxon>Spermatophyta</taxon>
        <taxon>Magnoliopsida</taxon>
        <taxon>eudicotyledons</taxon>
        <taxon>Gunneridae</taxon>
        <taxon>Pentapetalae</taxon>
        <taxon>rosids</taxon>
        <taxon>malvids</taxon>
        <taxon>Brassicales</taxon>
        <taxon>Brassicaceae</taxon>
        <taxon>Camelineae</taxon>
        <taxon>Arabidopsis</taxon>
    </lineage>
</organism>
<evidence type="ECO:0000250" key="1"/>
<evidence type="ECO:0000255" key="2">
    <source>
        <dbReference type="PROSITE-ProRule" id="PRU00318"/>
    </source>
</evidence>
<evidence type="ECO:0000305" key="3"/>